<reference key="1">
    <citation type="submission" date="2006-08" db="EMBL/GenBank/DDBJ databases">
        <title>Complete sequence of chromosome 1 of Burkholderia cenocepacia HI2424.</title>
        <authorList>
            <person name="Copeland A."/>
            <person name="Lucas S."/>
            <person name="Lapidus A."/>
            <person name="Barry K."/>
            <person name="Detter J.C."/>
            <person name="Glavina del Rio T."/>
            <person name="Hammon N."/>
            <person name="Israni S."/>
            <person name="Pitluck S."/>
            <person name="Chain P."/>
            <person name="Malfatti S."/>
            <person name="Shin M."/>
            <person name="Vergez L."/>
            <person name="Schmutz J."/>
            <person name="Larimer F."/>
            <person name="Land M."/>
            <person name="Hauser L."/>
            <person name="Kyrpides N."/>
            <person name="Kim E."/>
            <person name="LiPuma J.J."/>
            <person name="Gonzalez C.F."/>
            <person name="Konstantinidis K."/>
            <person name="Tiedje J.M."/>
            <person name="Richardson P."/>
        </authorList>
    </citation>
    <scope>NUCLEOTIDE SEQUENCE [LARGE SCALE GENOMIC DNA]</scope>
    <source>
        <strain>HI2424</strain>
    </source>
</reference>
<dbReference type="EMBL" id="CP000458">
    <property type="protein sequence ID" value="ABK07833.1"/>
    <property type="molecule type" value="Genomic_DNA"/>
</dbReference>
<dbReference type="SMR" id="A0K5Q6"/>
<dbReference type="KEGG" id="bch:Bcen2424_1080"/>
<dbReference type="HOGENOM" id="CLU_106757_1_0_4"/>
<dbReference type="GO" id="GO:0005829">
    <property type="term" value="C:cytosol"/>
    <property type="evidence" value="ECO:0007669"/>
    <property type="project" value="TreeGrafter"/>
</dbReference>
<dbReference type="GO" id="GO:0043022">
    <property type="term" value="F:ribosome binding"/>
    <property type="evidence" value="ECO:0007669"/>
    <property type="project" value="UniProtKB-UniRule"/>
</dbReference>
<dbReference type="GO" id="GO:0019843">
    <property type="term" value="F:rRNA binding"/>
    <property type="evidence" value="ECO:0007669"/>
    <property type="project" value="UniProtKB-UniRule"/>
</dbReference>
<dbReference type="GO" id="GO:1902626">
    <property type="term" value="P:assembly of large subunit precursor of preribosome"/>
    <property type="evidence" value="ECO:0007669"/>
    <property type="project" value="UniProtKB-UniRule"/>
</dbReference>
<dbReference type="CDD" id="cd16331">
    <property type="entry name" value="YjgA-like"/>
    <property type="match status" value="1"/>
</dbReference>
<dbReference type="Gene3D" id="1.10.60.30">
    <property type="entry name" value="PSPTO4464-like domains"/>
    <property type="match status" value="2"/>
</dbReference>
<dbReference type="HAMAP" id="MF_00765">
    <property type="entry name" value="DarP"/>
    <property type="match status" value="1"/>
</dbReference>
<dbReference type="InterPro" id="IPR006839">
    <property type="entry name" value="DarP"/>
</dbReference>
<dbReference type="InterPro" id="IPR023153">
    <property type="entry name" value="DarP_sf"/>
</dbReference>
<dbReference type="NCBIfam" id="NF003593">
    <property type="entry name" value="PRK05255.1-1"/>
    <property type="match status" value="1"/>
</dbReference>
<dbReference type="PANTHER" id="PTHR38101">
    <property type="entry name" value="UPF0307 PROTEIN YJGA"/>
    <property type="match status" value="1"/>
</dbReference>
<dbReference type="PANTHER" id="PTHR38101:SF1">
    <property type="entry name" value="UPF0307 PROTEIN YJGA"/>
    <property type="match status" value="1"/>
</dbReference>
<dbReference type="Pfam" id="PF04751">
    <property type="entry name" value="DarP"/>
    <property type="match status" value="1"/>
</dbReference>
<dbReference type="PIRSF" id="PIRSF016183">
    <property type="entry name" value="UCP016183"/>
    <property type="match status" value="1"/>
</dbReference>
<dbReference type="SUPFAM" id="SSF158710">
    <property type="entry name" value="PSPTO4464-like"/>
    <property type="match status" value="1"/>
</dbReference>
<evidence type="ECO:0000255" key="1">
    <source>
        <dbReference type="HAMAP-Rule" id="MF_00765"/>
    </source>
</evidence>
<evidence type="ECO:0000256" key="2">
    <source>
        <dbReference type="SAM" id="MobiDB-lite"/>
    </source>
</evidence>
<protein>
    <recommendedName>
        <fullName evidence="1">Dual-action ribosomal maturation protein DarP</fullName>
    </recommendedName>
    <alternativeName>
        <fullName evidence="1">Large ribosomal subunit assembly factor DarP</fullName>
    </alternativeName>
</protein>
<proteinExistence type="inferred from homology"/>
<accession>A0K5Q6</accession>
<comment type="function">
    <text evidence="1">Member of a network of 50S ribosomal subunit biogenesis factors which assembles along the 30S-50S interface, preventing incorrect 23S rRNA structures from forming. Promotes peptidyl transferase center (PTC) maturation.</text>
</comment>
<comment type="subcellular location">
    <subcellularLocation>
        <location evidence="1">Cytoplasm</location>
    </subcellularLocation>
    <text evidence="1">Associates with late stage pre-50S ribosomal subunits.</text>
</comment>
<comment type="similarity">
    <text evidence="1">Belongs to the DarP family.</text>
</comment>
<sequence>MPPMTRKTRIQPIEPVAEEDDNGYDRPSKSQLKREMHELQVLGQALVDLPKDALKRMPMPESLGDAVREARRITDHEGKRRQLQYVGRVMRSLTDDETAALRTALDAQRGVNKAATARLHWIERTREQLLASDDALTEFLRQHPDADIQEGRTLIRNARKEAQQGKPPRYFRELFQWIKAAGGASDSDDEAADDAGDDHDDEA</sequence>
<name>DARP_BURCH</name>
<gene>
    <name evidence="1" type="primary">darP</name>
    <name type="ordered locus">Bcen2424_1080</name>
</gene>
<feature type="chain" id="PRO_1000046794" description="Dual-action ribosomal maturation protein DarP">
    <location>
        <begin position="1"/>
        <end position="203"/>
    </location>
</feature>
<feature type="region of interest" description="Disordered" evidence="2">
    <location>
        <begin position="1"/>
        <end position="31"/>
    </location>
</feature>
<feature type="region of interest" description="Disordered" evidence="2">
    <location>
        <begin position="182"/>
        <end position="203"/>
    </location>
</feature>
<feature type="compositionally biased region" description="Acidic residues" evidence="2">
    <location>
        <begin position="186"/>
        <end position="203"/>
    </location>
</feature>
<organism>
    <name type="scientific">Burkholderia cenocepacia (strain HI2424)</name>
    <dbReference type="NCBI Taxonomy" id="331272"/>
    <lineage>
        <taxon>Bacteria</taxon>
        <taxon>Pseudomonadati</taxon>
        <taxon>Pseudomonadota</taxon>
        <taxon>Betaproteobacteria</taxon>
        <taxon>Burkholderiales</taxon>
        <taxon>Burkholderiaceae</taxon>
        <taxon>Burkholderia</taxon>
        <taxon>Burkholderia cepacia complex</taxon>
    </lineage>
</organism>
<keyword id="KW-0963">Cytoplasm</keyword>
<keyword id="KW-0690">Ribosome biogenesis</keyword>
<keyword id="KW-0694">RNA-binding</keyword>
<keyword id="KW-0699">rRNA-binding</keyword>